<keyword id="KW-1003">Cell membrane</keyword>
<keyword id="KW-0966">Cell projection</keyword>
<keyword id="KW-0209">Deafness</keyword>
<keyword id="KW-0325">Glycoprotein</keyword>
<keyword id="KW-0472">Membrane</keyword>
<keyword id="KW-1010">Non-syndromic deafness</keyword>
<keyword id="KW-1267">Proteomics identification</keyword>
<keyword id="KW-0675">Receptor</keyword>
<keyword id="KW-1185">Reference proteome</keyword>
<keyword id="KW-0677">Repeat</keyword>
<keyword id="KW-0732">Signal</keyword>
<keyword id="KW-0812">Transmembrane</keyword>
<keyword id="KW-1133">Transmembrane helix</keyword>
<evidence type="ECO:0000250" key="1">
    <source>
        <dbReference type="UniProtKB" id="Q80ZA4"/>
    </source>
</evidence>
<evidence type="ECO:0000255" key="2"/>
<evidence type="ECO:0000255" key="3">
    <source>
        <dbReference type="PROSITE-ProRule" id="PRU00817"/>
    </source>
</evidence>
<evidence type="ECO:0000255" key="4">
    <source>
        <dbReference type="PROSITE-ProRule" id="PRU01164"/>
    </source>
</evidence>
<evidence type="ECO:0000269" key="5">
    <source>
    </source>
</evidence>
<evidence type="ECO:0000269" key="6">
    <source>
    </source>
</evidence>
<evidence type="ECO:0000305" key="7"/>
<protein>
    <recommendedName>
        <fullName>Fibrocystin-L</fullName>
    </recommendedName>
    <alternativeName>
        <fullName>Polycystic kidney and hepatic disease 1-like protein 1</fullName>
        <shortName>PKHD1-like protein 1</shortName>
    </alternativeName>
</protein>
<dbReference type="EMBL" id="AY219181">
    <property type="protein sequence ID" value="AAO60072.1"/>
    <property type="molecule type" value="mRNA"/>
</dbReference>
<dbReference type="EMBL" id="AC021001">
    <property type="status" value="NOT_ANNOTATED_CDS"/>
    <property type="molecule type" value="Genomic_DNA"/>
</dbReference>
<dbReference type="EMBL" id="AC021237">
    <property type="status" value="NOT_ANNOTATED_CDS"/>
    <property type="molecule type" value="Genomic_DNA"/>
</dbReference>
<dbReference type="EMBL" id="BC093096">
    <property type="protein sequence ID" value="AAH93096.1"/>
    <property type="status" value="ALT_SEQ"/>
    <property type="molecule type" value="mRNA"/>
</dbReference>
<dbReference type="EMBL" id="AL133640">
    <property type="protein sequence ID" value="CAB63761.1"/>
    <property type="molecule type" value="mRNA"/>
</dbReference>
<dbReference type="CCDS" id="CCDS47911.1"/>
<dbReference type="PIR" id="T43498">
    <property type="entry name" value="T43498"/>
</dbReference>
<dbReference type="RefSeq" id="NP_803875.2">
    <property type="nucleotide sequence ID" value="NM_177531.6"/>
</dbReference>
<dbReference type="SMR" id="Q86WI1"/>
<dbReference type="BioGRID" id="124996">
    <property type="interactions" value="5"/>
</dbReference>
<dbReference type="DIP" id="DIP-59023N"/>
<dbReference type="FunCoup" id="Q86WI1">
    <property type="interactions" value="56"/>
</dbReference>
<dbReference type="IntAct" id="Q86WI1">
    <property type="interactions" value="3"/>
</dbReference>
<dbReference type="MINT" id="Q86WI1"/>
<dbReference type="STRING" id="9606.ENSP00000367655"/>
<dbReference type="CarbonylDB" id="Q86WI1"/>
<dbReference type="GlyCosmos" id="Q86WI1">
    <property type="glycosylation" value="6 sites, No reported glycans"/>
</dbReference>
<dbReference type="GlyGen" id="Q86WI1">
    <property type="glycosylation" value="12 sites, 4 N-linked glycans (3 sites), 1 O-linked glycan (1 site)"/>
</dbReference>
<dbReference type="iPTMnet" id="Q86WI1"/>
<dbReference type="PhosphoSitePlus" id="Q86WI1"/>
<dbReference type="BioMuta" id="PKHD1L1"/>
<dbReference type="DMDM" id="269849629"/>
<dbReference type="jPOST" id="Q86WI1"/>
<dbReference type="MassIVE" id="Q86WI1"/>
<dbReference type="PaxDb" id="9606-ENSP00000367655"/>
<dbReference type="PeptideAtlas" id="Q86WI1"/>
<dbReference type="ProteomicsDB" id="70165"/>
<dbReference type="Antibodypedia" id="26574">
    <property type="antibodies" value="20 antibodies from 9 providers"/>
</dbReference>
<dbReference type="DNASU" id="93035"/>
<dbReference type="Ensembl" id="ENST00000378402.10">
    <property type="protein sequence ID" value="ENSP00000367655.5"/>
    <property type="gene ID" value="ENSG00000205038.12"/>
</dbReference>
<dbReference type="GeneID" id="93035"/>
<dbReference type="KEGG" id="hsa:93035"/>
<dbReference type="MANE-Select" id="ENST00000378402.10">
    <property type="protein sequence ID" value="ENSP00000367655.5"/>
    <property type="RefSeq nucleotide sequence ID" value="NM_177531.6"/>
    <property type="RefSeq protein sequence ID" value="NP_803875.2"/>
</dbReference>
<dbReference type="UCSC" id="uc003yne.4">
    <property type="organism name" value="human"/>
</dbReference>
<dbReference type="AGR" id="HGNC:20313"/>
<dbReference type="CTD" id="93035"/>
<dbReference type="DisGeNET" id="93035"/>
<dbReference type="GeneCards" id="PKHD1L1"/>
<dbReference type="HGNC" id="HGNC:20313">
    <property type="gene designation" value="PKHD1L1"/>
</dbReference>
<dbReference type="HPA" id="ENSG00000205038">
    <property type="expression patterns" value="Tissue enhanced (adipose tissue, thyroid gland)"/>
</dbReference>
<dbReference type="MalaCards" id="PKHD1L1"/>
<dbReference type="MIM" id="607843">
    <property type="type" value="gene"/>
</dbReference>
<dbReference type="MIM" id="620794">
    <property type="type" value="phenotype"/>
</dbReference>
<dbReference type="neXtProt" id="NX_Q86WI1"/>
<dbReference type="OpenTargets" id="ENSG00000205038"/>
<dbReference type="PharmGKB" id="PA134950222"/>
<dbReference type="VEuPathDB" id="HostDB:ENSG00000205038"/>
<dbReference type="eggNOG" id="KOG3610">
    <property type="taxonomic scope" value="Eukaryota"/>
</dbReference>
<dbReference type="GeneTree" id="ENSGT00940000157594"/>
<dbReference type="HOGENOM" id="CLU_000057_1_0_1"/>
<dbReference type="InParanoid" id="Q86WI1"/>
<dbReference type="OMA" id="RSFPQKM"/>
<dbReference type="OrthoDB" id="120976at2759"/>
<dbReference type="PAN-GO" id="Q86WI1">
    <property type="GO annotations" value="0 GO annotations based on evolutionary models"/>
</dbReference>
<dbReference type="PhylomeDB" id="Q86WI1"/>
<dbReference type="TreeFam" id="TF329582"/>
<dbReference type="PathwayCommons" id="Q86WI1"/>
<dbReference type="SignaLink" id="Q86WI1"/>
<dbReference type="BioGRID-ORCS" id="93035">
    <property type="hits" value="14 hits in 1149 CRISPR screens"/>
</dbReference>
<dbReference type="ChiTaRS" id="PKHD1L1">
    <property type="organism name" value="human"/>
</dbReference>
<dbReference type="GenomeRNAi" id="93035"/>
<dbReference type="Pharos" id="Q86WI1">
    <property type="development level" value="Tdark"/>
</dbReference>
<dbReference type="PRO" id="PR:Q86WI1"/>
<dbReference type="Proteomes" id="UP000005640">
    <property type="component" value="Chromosome 8"/>
</dbReference>
<dbReference type="RNAct" id="Q86WI1">
    <property type="molecule type" value="protein"/>
</dbReference>
<dbReference type="Bgee" id="ENSG00000205038">
    <property type="expression patterns" value="Expressed in right uterine tube and 120 other cell types or tissues"/>
</dbReference>
<dbReference type="ExpressionAtlas" id="Q86WI1">
    <property type="expression patterns" value="baseline and differential"/>
</dbReference>
<dbReference type="GO" id="GO:0005829">
    <property type="term" value="C:cytosol"/>
    <property type="evidence" value="ECO:0000304"/>
    <property type="project" value="UniProtKB"/>
</dbReference>
<dbReference type="GO" id="GO:0005615">
    <property type="term" value="C:extracellular space"/>
    <property type="evidence" value="ECO:0000303"/>
    <property type="project" value="UniProtKB"/>
</dbReference>
<dbReference type="GO" id="GO:0016020">
    <property type="term" value="C:membrane"/>
    <property type="evidence" value="ECO:0000303"/>
    <property type="project" value="UniProtKB"/>
</dbReference>
<dbReference type="GO" id="GO:0120234">
    <property type="term" value="C:stereocilium coat"/>
    <property type="evidence" value="ECO:0007669"/>
    <property type="project" value="Ensembl"/>
</dbReference>
<dbReference type="GO" id="GO:0060171">
    <property type="term" value="C:stereocilium membrane"/>
    <property type="evidence" value="ECO:0007669"/>
    <property type="project" value="UniProtKB-SubCell"/>
</dbReference>
<dbReference type="GO" id="GO:0032426">
    <property type="term" value="C:stereocilium tip"/>
    <property type="evidence" value="ECO:0007669"/>
    <property type="project" value="Ensembl"/>
</dbReference>
<dbReference type="GO" id="GO:0038023">
    <property type="term" value="F:signaling receptor activity"/>
    <property type="evidence" value="ECO:0000303"/>
    <property type="project" value="UniProtKB"/>
</dbReference>
<dbReference type="GO" id="GO:0006955">
    <property type="term" value="P:immune response"/>
    <property type="evidence" value="ECO:0000303"/>
    <property type="project" value="UniProtKB"/>
</dbReference>
<dbReference type="GO" id="GO:0007605">
    <property type="term" value="P:sensory perception of sound"/>
    <property type="evidence" value="ECO:0007669"/>
    <property type="project" value="Ensembl"/>
</dbReference>
<dbReference type="CDD" id="cd04217">
    <property type="entry name" value="Cupredoxin_Fibrocystin-L_like"/>
    <property type="match status" value="1"/>
</dbReference>
<dbReference type="CDD" id="cd00603">
    <property type="entry name" value="IPT_PCSR"/>
    <property type="match status" value="14"/>
</dbReference>
<dbReference type="FunFam" id="2.60.40.420:FF:000065">
    <property type="entry name" value="Fibrocystin-L"/>
    <property type="match status" value="1"/>
</dbReference>
<dbReference type="FunFam" id="2.160.20.10:FF:000031">
    <property type="entry name" value="PKHD1 like 1"/>
    <property type="match status" value="1"/>
</dbReference>
<dbReference type="FunFam" id="2.60.40.10:FF:000616">
    <property type="entry name" value="PKHD1 like 1"/>
    <property type="match status" value="2"/>
</dbReference>
<dbReference type="FunFam" id="2.60.40.10:FF:000857">
    <property type="entry name" value="PKHD1 like 1"/>
    <property type="match status" value="1"/>
</dbReference>
<dbReference type="FunFam" id="2.60.40.10:FF:001057">
    <property type="entry name" value="PKHD1 like 1"/>
    <property type="match status" value="1"/>
</dbReference>
<dbReference type="FunFam" id="2.60.40.10:FF:001162">
    <property type="entry name" value="PKHD1 like 1"/>
    <property type="match status" value="1"/>
</dbReference>
<dbReference type="FunFam" id="2.60.40.10:FF:001165">
    <property type="entry name" value="PKHD1 like 1"/>
    <property type="match status" value="1"/>
</dbReference>
<dbReference type="FunFam" id="2.60.40.10:FF:001195">
    <property type="entry name" value="PKHD1 like 1"/>
    <property type="match status" value="1"/>
</dbReference>
<dbReference type="FunFam" id="2.60.40.10:FF:001202">
    <property type="entry name" value="PKHD1 like 1"/>
    <property type="match status" value="1"/>
</dbReference>
<dbReference type="FunFam" id="2.60.40.10:FF:001220">
    <property type="entry name" value="PKHD1 like 1"/>
    <property type="match status" value="1"/>
</dbReference>
<dbReference type="FunFam" id="2.60.40.10:FF:001292">
    <property type="entry name" value="PKHD1 like 1"/>
    <property type="match status" value="1"/>
</dbReference>
<dbReference type="FunFam" id="2.60.40.10:FF:001316">
    <property type="entry name" value="PKHD1 like 1"/>
    <property type="match status" value="1"/>
</dbReference>
<dbReference type="FunFam" id="2.60.40.10:FF:001332">
    <property type="entry name" value="PKHD1 like 1"/>
    <property type="match status" value="1"/>
</dbReference>
<dbReference type="FunFam" id="2.60.40.10:FF:001552">
    <property type="entry name" value="PKHD1 like 1"/>
    <property type="match status" value="1"/>
</dbReference>
<dbReference type="FunFam" id="2.60.40.10:FF:001567">
    <property type="entry name" value="PKHD1 like 1"/>
    <property type="match status" value="1"/>
</dbReference>
<dbReference type="Gene3D" id="2.60.40.420">
    <property type="entry name" value="Cupredoxins - blue copper proteins"/>
    <property type="match status" value="1"/>
</dbReference>
<dbReference type="Gene3D" id="2.60.40.10">
    <property type="entry name" value="Immunoglobulins"/>
    <property type="match status" value="14"/>
</dbReference>
<dbReference type="Gene3D" id="2.160.20.10">
    <property type="entry name" value="Single-stranded right-handed beta-helix, Pectin lyase-like"/>
    <property type="match status" value="1"/>
</dbReference>
<dbReference type="InterPro" id="IPR055401">
    <property type="entry name" value="CEMIP_beta-hel_dom"/>
</dbReference>
<dbReference type="InterPro" id="IPR008972">
    <property type="entry name" value="Cupredoxin"/>
</dbReference>
<dbReference type="InterPro" id="IPR052387">
    <property type="entry name" value="Fibrocystin"/>
</dbReference>
<dbReference type="InterPro" id="IPR019316">
    <property type="entry name" value="G8_domain"/>
</dbReference>
<dbReference type="InterPro" id="IPR013783">
    <property type="entry name" value="Ig-like_fold"/>
</dbReference>
<dbReference type="InterPro" id="IPR014756">
    <property type="entry name" value="Ig_E-set"/>
</dbReference>
<dbReference type="InterPro" id="IPR002909">
    <property type="entry name" value="IPT_dom"/>
</dbReference>
<dbReference type="InterPro" id="IPR037524">
    <property type="entry name" value="PA14/GLEYA"/>
</dbReference>
<dbReference type="InterPro" id="IPR011658">
    <property type="entry name" value="PA14_dom"/>
</dbReference>
<dbReference type="InterPro" id="IPR006626">
    <property type="entry name" value="PbH1"/>
</dbReference>
<dbReference type="InterPro" id="IPR012334">
    <property type="entry name" value="Pectin_lyas_fold"/>
</dbReference>
<dbReference type="InterPro" id="IPR011050">
    <property type="entry name" value="Pectin_lyase_fold/virulence"/>
</dbReference>
<dbReference type="PANTHER" id="PTHR46769:SF3">
    <property type="entry name" value="FIBROCYSTIN-L"/>
    <property type="match status" value="1"/>
</dbReference>
<dbReference type="PANTHER" id="PTHR46769">
    <property type="entry name" value="POLYCYSTIC KIDNEY AND HEPATIC DISEASE 1 (AUTOSOMAL RECESSIVE)-LIKE 1"/>
    <property type="match status" value="1"/>
</dbReference>
<dbReference type="Pfam" id="PF24606">
    <property type="entry name" value="CEMIP_beta-hel"/>
    <property type="match status" value="2"/>
</dbReference>
<dbReference type="Pfam" id="PF10162">
    <property type="entry name" value="G8"/>
    <property type="match status" value="2"/>
</dbReference>
<dbReference type="Pfam" id="PF07691">
    <property type="entry name" value="PA14"/>
    <property type="match status" value="1"/>
</dbReference>
<dbReference type="Pfam" id="PF01833">
    <property type="entry name" value="TIG"/>
    <property type="match status" value="14"/>
</dbReference>
<dbReference type="SMART" id="SM01225">
    <property type="entry name" value="G8"/>
    <property type="match status" value="2"/>
</dbReference>
<dbReference type="SMART" id="SM00429">
    <property type="entry name" value="IPT"/>
    <property type="match status" value="14"/>
</dbReference>
<dbReference type="SMART" id="SM00758">
    <property type="entry name" value="PA14"/>
    <property type="match status" value="1"/>
</dbReference>
<dbReference type="SMART" id="SM00710">
    <property type="entry name" value="PbH1"/>
    <property type="match status" value="10"/>
</dbReference>
<dbReference type="SUPFAM" id="SSF56988">
    <property type="entry name" value="Anthrax protective antigen"/>
    <property type="match status" value="1"/>
</dbReference>
<dbReference type="SUPFAM" id="SSF49503">
    <property type="entry name" value="Cupredoxins"/>
    <property type="match status" value="1"/>
</dbReference>
<dbReference type="SUPFAM" id="SSF81296">
    <property type="entry name" value="E set domains"/>
    <property type="match status" value="14"/>
</dbReference>
<dbReference type="SUPFAM" id="SSF51126">
    <property type="entry name" value="Pectin lyase-like"/>
    <property type="match status" value="1"/>
</dbReference>
<dbReference type="PROSITE" id="PS51484">
    <property type="entry name" value="G8"/>
    <property type="match status" value="2"/>
</dbReference>
<dbReference type="PROSITE" id="PS51820">
    <property type="entry name" value="PA14"/>
    <property type="match status" value="1"/>
</dbReference>
<accession>Q86WI1</accession>
<accession>Q567P2</accession>
<accession>Q9UF27</accession>
<sequence>MGHLWLLGIWGLCGLLLCAADPSTDGSQIIPKVTEIIPKYGSINGATRLTIRGEGFSQANQFNYGVDNAELGNSVQLISSFQSITCDVEKDASHSTQITCYTRAMPEDSYTVRVSVDGVPVTENNTCKGHINSWECTFNAKSFRTPTIRSITPLSGTPGTLITIQGRIFTDVYGSNIALSSNGKNVRILRVYIGGMPCELLIPQSDNLYGLKLDHPNGDMGSMVCKTTGTFIGHHNVSFILDNDYGRSFPQKMAYFVSSLNKIAMFQTYAEVTMIFPSQGSIRGGTTLTISGRFFDQTDFPVRVLVGGEPCDILNVTENSICCKTPPKPHILKTVYPGGRGLKLEVWNNSRPIRLEEILEYNEKTPGYMGASWVDSASYIWLMEQDTFVARFSGFLVAPDSDVYRFYIKGDDRYAIYFSQTGLPEDKVRIAYHSANANSYFSSPTQRSDDIHLQKGKEYYIEILLQEYRLSAFVDVGLYQYRNVYTEQQTGDAVNEEQVIKSQSTILQEVQVITLENWETTNAINEVQKIKVTSPCVEANSCSLYQYRLIYNMEKTVFLPADASEFILQSALNDLWSIKPDTVQVIRTQNPQSYVYMVTFISTRGDFDLLGYEVVEGNNVTLDITEQTKGKPNLETFTLNWDGIASKPLTLWSSEAEFQGAVEEMVSTKCPPQIANFEEGFVVKYFRDYETDFNLEHINRGQKTAETDAYCGRYSLKNPAVLFDSADVKPNRRPYGDILLFPYNQLCLAYKGFLANYIGLKFQYQDNSKITRSTDTQFTYNFAYGNNWTYTCIDLLDLVRTKYTGTNVSLQRISLHKASESQSFYVDVVYIGHTSTISTLDEMPKRRLPALANKGIFLEHFQVNQTKTNGPTMTNQYSVTMTSYNCSYNIPMMAVSFGQIITHETENEFVYRGNNWPGESKIHIQRIQAASPPLSGSFDIQAYGHILKGLPAAVSAADLQFALQSLEGMGRISVTREGTCAGYAWNIKWRSTCGKQNLLQINDSNIIGEKANMTVTRIKEGGLFRQHVLGDLLRTPSQQPQVEVYVNGIPAKCSGDCGFTWDSNITPLVLAISPSQGSYEEGTILTIVGSGFSPSSAVTVSVGPVGCSLLSVDEKELKCQILNGSAGHAPVAVSMADVGLAQNVGGEEFYFVYQSQISHIWPDSGSIAGGTLLTLSGFGFNENSKVLVGNETCNVIEGDLNRITCRTPKKTEGTVDISVTTNGFQATARDAFSYNCLQTPIITDFSPKVRTILGEVNLTIKGYNFGNELTQNMAVYVGGKTCQILHWNFTDIRCLLPKLSPGKHDIYVEVRNWGFASTRDKLNSSIQYVLEVTSMFPQRGSLFGGTEITIRGFGFSTIPAENTVLLGSIPCNVTSSSENVIKCILHSTGNIFRITNNGKDSVHGLGYAWSPPVLNVSVGDTVAWHWQTHPFLRGIGYRIFSVSSPGSVIYDGKGFTSGRQKSTSGSFSYQFTSPGIHYYSSGYVDEAHSIFLQGVINVLPAETRHIPLHLFVGRSEATYAYGGPENLHLGSSVAGCLATEPLCSLNNTRVKNSKRLLFEVSSCFSPSISNITPSTGTVNELITIIGHGFSNLPWANKVTIGSYPCVVEESSEDSITCHIDPQNSMDVGIRETVTLTVYNLGTAINTLSNEFDRRFVLLPNIDLVLPNAGSTTGMTSVTIKGSGFAVSSAGVKVLMGHFPCKVLSVNYTAIECETSPAAQQLVDVDLLIHGVPAQCQGNCTFSYLESITPYITGVFPNSVIGSVKVLIEGEGLGTVLEDIAVFIGNQQFRAIEVNENNITALVTPLPVGHHSVSVVVGSKGLALGNLTVSSPPVASLSPTSGSIGGGTTLVITGNGFYPGNTTVTIGDEPCQIISINPNEVYCRTPAGTTGMVDVKIFVNTIAYPPLLFTYALEDTPFLRGIIPSRGPPGTEIEITGSNFGFEILEISVMINNIQCNVTMANDSVVQCIVGDHAGGTFPVMMHHKTKGSAMSTVVFEYPLNIQNINPSQGSFGGGQTMTVTGTGFNPQNSIILVCGSECAIDRLRSDYTTLLCEIPSNNGTGAEQACEVSVVNGKDLSQSMTPFTYAVSLTPLITAVSPKRGSTAGGTRLTVVGSGFSENMEDVHITIAEAKCDVEYSNKTHIICMTDAHTLSGWAPVCVHIRGVGMAKLDNADFLYVDAWSSNFSWGGKSPPEEGSLVVITKGQTILLDQSTPILKMLLIQGGTLIFDEADIELQAENILITDGGVLQIGTETSPFQHKAVITLHGHLRSPELPVYGAKTLAVREGILDLHGVPVPVTWTRLAHTAKAGERILILQEAVTWKPGDNIVIASTGHRHSQGENEKMTIASVSADGINITLSNPLNYTHLGITVTLPDGTLFEARAEVGILTRNILIRGSDNVEWNNKIPACPDGFDTGEFATQTCLQGKFGEEIGSDQFGGCVMFHAPVPGANMVTGRIEYVEVFHAGQAFRLGRYPIHWHLLGDLQFKSYVRGCAIHQAYNRAVTIHNTHHLLVERNIIYDIKGGAFFIEDGIEHGNILQYNLAVFVQQSTSLLNDDVTPAAFWVTNPNNTIRHNAVAGGTHFGFWYRMNNHPDGPSYDRNICQKRVPLGEFFNNTVHSQGWFGMWIFEEYFPMQTGSCTSTVPAPAIFNSLTTWNCQKGAEWVNGGALQFHNFVMVNNYEAGIETKRILAPYVGGWGETNGAVIKNAKIVGHLDELGMGSAFCTAKGLVLPFSEGLTVSSVHFMNFDRPNCVALGVTSISGVCNDRCGGWSAKFVDVQYSHTPNKAGFRWEHEMVMIDVDGSLTGHKGHTVIPHSSLLDPSHCTQEAEWSIGFPGSVCDASVSFHRLAFNQPSPVSLLEKDVVLSDSFGTSIIPFQKKRLTHMSGWMALIPNANHINWYFKGVDHITNISYTSTFYGFKEEDYVIISHNFTQNPDMFNIIDMRNGSSNPLNWNTSKNGDWHLEANTSTLYYLVSGRNDLHQSQLISGNLDPDVKDVVINFQAYCCILQDCFPVHPPSRKPIPKKRPATYNLWSNDSFWQSSRENNYTVPHPGANVIIPEGTWIVADIDMPSMERLIIWGVLELEDKYNVGAAESSYREVVLNATYISLQGGRLIGGWEDNPFKGDLKIVLRGNHTTQDWALPEGPNQGAKVLGVFGELDLHGIPHSIYKTKLSETAFAGSKVLSLMDAVDWQEGEEIVITTTSYDFHQTETRSIVKILHDHKILILNDSLSYTHFAEKYHVPGTGESYTLAADVGILSRNIKIVGEDYPGWSEDSFGARVLVGSFTENMMTFKGNARISNVEFYHSGQEGFRDSTDPRYAVTFLNLGQIQEHGSSYIRGCAFHHGFSPAIGVFGTDGLDIDDNIIHFTVGEGIRIWGNANRVRGNLIALSVWPGTYQNRKDLSSTLWHAAIEINRGTNTVLQNNVVAGFGRAGYRIDGEPCPGQFNPVEKWFDNEAHGGLYGIYMNQDGLPGCSLIQGFTIWTCWDYGIYFQTTESVHIYNVTLVDNGMAIFPMIYMPAAISHKISSKNVQIKSSLIVGSSPGFNCSDVLTNDDPNIELTAAHRSPRSPSGGRSGICWPTFASAHNMAPRKPHAGIMSYNAISGLLDISGSTFVGFKNVCSGETNVIFITNPLNEDLQHPIHVKNIKLVDTTEQSKIFIHRPDISKVNPSDCVDMVCDAKRKSFLRDIDGSFLGNAGSVIPQAEYEWDGNSQVGIGDYRIPKAMLTFLNGSRIPVTEKAPHKGIIRDSTCKYLPEWQSYQCFGMEYAMMVIESLDPDTETRRLSPVAIMGNGYVDLINGPQDHGWCAGYTCQRRLSLFHSIVALNKSYEVYFTGTSPQNLRLMLLNVDHNKAVLVGIFFSTLQRLDVYVNNLLVCPKTTIWNAQQKHCELNNHLYKDQFLPNLDSTVLGENYFDGTYQMLYLLVKGTIPVEIHTATVIFVSFQLSVATEDDFYTSHNLVKNLALFLKIPSDKIRISKIRGKSLRRKRSMGFIIEIEIGDPPIQFISNGTTGQMQLSELQEIAGSLGQAVILGNISSILGFNISSMSITNPLPSPSDSGWIKVTAQPVERSAFPVHHVAFVSSLLVITQPVAAQPGQPFPQQPSVKATDSDGNCVSVGITALTLRAILKDSNNNQVNGLSGNTTIPFSSCWANYTDLTPLRTGKNYKIEFILDNVVGVESRTFSLLAESVSSSGSSSSSNSKASTVGTYAQIMTVVISCLVGRMWLLEIFMAAVSTLNITLRSY</sequence>
<name>PKHL1_HUMAN</name>
<gene>
    <name type="primary">PKHD1L1</name>
</gene>
<proteinExistence type="evidence at protein level"/>
<comment type="function">
    <text evidence="1">Component of hair-cell stereocilia coat. Required for normal hearing.</text>
</comment>
<comment type="subcellular location">
    <subcellularLocation>
        <location evidence="7">Membrane</location>
        <topology evidence="7">Single-pass membrane protein</topology>
    </subcellularLocation>
    <subcellularLocation>
        <location evidence="1">Cell projection</location>
        <location evidence="1">Stereocilium membrane</location>
    </subcellularLocation>
    <text evidence="1">Predominantly located at the upper half of the stereocilia of inner ear outer hair cell.</text>
</comment>
<comment type="disease" evidence="6">
    <disease id="DI-06888">
        <name>Deafness, autosomal recessive, 124</name>
        <acronym>DFNB124</acronym>
        <description>A form of non-syndromic deafness characterized by progressive sensorineural hearing loss with onset at birth. Sensorineural hearing loss results from damage to the neural receptors of the inner ear, the nerve pathways to the brain, or the area of the brain that receives sound information.</description>
        <dbReference type="MIM" id="620794"/>
    </disease>
    <text>The disease may be caused by variants affecting the gene represented in this entry.</text>
</comment>
<comment type="sequence caution" evidence="7">
    <conflict type="miscellaneous discrepancy">
        <sequence resource="EMBL-CDS" id="AAH93096"/>
    </conflict>
    <text>Contaminating sequence. Potential poly-A sequence.</text>
</comment>
<reference key="1">
    <citation type="journal article" date="2003" name="Hum. Mol. Genet.">
        <title>PKHDL1, a homolog of the autosomal recessive polycystic kidney disease gene, encodes a receptor with inducible T lymphocyte expression.</title>
        <authorList>
            <person name="Hogan M.C."/>
            <person name="Griffin M.D."/>
            <person name="Rossetti S."/>
            <person name="Torres V.E."/>
            <person name="Ward C.J."/>
            <person name="Harris P.C."/>
        </authorList>
    </citation>
    <scope>NUCLEOTIDE SEQUENCE [MRNA]</scope>
    <scope>VARIANT LEU-1965</scope>
</reference>
<reference key="2">
    <citation type="journal article" date="2006" name="Nature">
        <title>DNA sequence and analysis of human chromosome 8.</title>
        <authorList>
            <person name="Nusbaum C."/>
            <person name="Mikkelsen T.S."/>
            <person name="Zody M.C."/>
            <person name="Asakawa S."/>
            <person name="Taudien S."/>
            <person name="Garber M."/>
            <person name="Kodira C.D."/>
            <person name="Schueler M.G."/>
            <person name="Shimizu A."/>
            <person name="Whittaker C.A."/>
            <person name="Chang J.L."/>
            <person name="Cuomo C.A."/>
            <person name="Dewar K."/>
            <person name="FitzGerald M.G."/>
            <person name="Yang X."/>
            <person name="Allen N.R."/>
            <person name="Anderson S."/>
            <person name="Asakawa T."/>
            <person name="Blechschmidt K."/>
            <person name="Bloom T."/>
            <person name="Borowsky M.L."/>
            <person name="Butler J."/>
            <person name="Cook A."/>
            <person name="Corum B."/>
            <person name="DeArellano K."/>
            <person name="DeCaprio D."/>
            <person name="Dooley K.T."/>
            <person name="Dorris L. III"/>
            <person name="Engels R."/>
            <person name="Gloeckner G."/>
            <person name="Hafez N."/>
            <person name="Hagopian D.S."/>
            <person name="Hall J.L."/>
            <person name="Ishikawa S.K."/>
            <person name="Jaffe D.B."/>
            <person name="Kamat A."/>
            <person name="Kudoh J."/>
            <person name="Lehmann R."/>
            <person name="Lokitsang T."/>
            <person name="Macdonald P."/>
            <person name="Major J.E."/>
            <person name="Matthews C.D."/>
            <person name="Mauceli E."/>
            <person name="Menzel U."/>
            <person name="Mihalev A.H."/>
            <person name="Minoshima S."/>
            <person name="Murayama Y."/>
            <person name="Naylor J.W."/>
            <person name="Nicol R."/>
            <person name="Nguyen C."/>
            <person name="O'Leary S.B."/>
            <person name="O'Neill K."/>
            <person name="Parker S.C.J."/>
            <person name="Polley A."/>
            <person name="Raymond C.K."/>
            <person name="Reichwald K."/>
            <person name="Rodriguez J."/>
            <person name="Sasaki T."/>
            <person name="Schilhabel M."/>
            <person name="Siddiqui R."/>
            <person name="Smith C.L."/>
            <person name="Sneddon T.P."/>
            <person name="Talamas J.A."/>
            <person name="Tenzin P."/>
            <person name="Topham K."/>
            <person name="Venkataraman V."/>
            <person name="Wen G."/>
            <person name="Yamazaki S."/>
            <person name="Young S.K."/>
            <person name="Zeng Q."/>
            <person name="Zimmer A.R."/>
            <person name="Rosenthal A."/>
            <person name="Birren B.W."/>
            <person name="Platzer M."/>
            <person name="Shimizu N."/>
            <person name="Lander E.S."/>
        </authorList>
    </citation>
    <scope>NUCLEOTIDE SEQUENCE [LARGE SCALE GENOMIC DNA]</scope>
</reference>
<reference key="3">
    <citation type="journal article" date="2004" name="Genome Res.">
        <title>The status, quality, and expansion of the NIH full-length cDNA project: the Mammalian Gene Collection (MGC).</title>
        <authorList>
            <consortium name="The MGC Project Team"/>
        </authorList>
    </citation>
    <scope>NUCLEOTIDE SEQUENCE [LARGE SCALE MRNA] OF 1-268</scope>
</reference>
<reference key="4">
    <citation type="journal article" date="2007" name="BMC Genomics">
        <title>The full-ORF clone resource of the German cDNA consortium.</title>
        <authorList>
            <person name="Bechtel S."/>
            <person name="Rosenfelder H."/>
            <person name="Duda A."/>
            <person name="Schmidt C.P."/>
            <person name="Ernst U."/>
            <person name="Wellenreuther R."/>
            <person name="Mehrle A."/>
            <person name="Schuster C."/>
            <person name="Bahr A."/>
            <person name="Bloecker H."/>
            <person name="Heubner D."/>
            <person name="Hoerlein A."/>
            <person name="Michel G."/>
            <person name="Wedler H."/>
            <person name="Koehrer K."/>
            <person name="Ottenwaelder B."/>
            <person name="Poustka A."/>
            <person name="Wiemann S."/>
            <person name="Schupp I."/>
        </authorList>
    </citation>
    <scope>NUCLEOTIDE SEQUENCE [LARGE SCALE MRNA] OF 3820-4243</scope>
    <source>
        <tissue>Uterus</tissue>
    </source>
</reference>
<reference key="5">
    <citation type="journal article" date="2024" name="Hum. Genet.">
        <title>PKHD1L1, a gene involved in the stereocilia coat, causes autosomal recessive nonsyndromic hearing loss.</title>
        <authorList>
            <person name="Redfield S.E."/>
            <person name="De-la-Torre P."/>
            <person name="Zamani M."/>
            <person name="Wang H."/>
            <person name="Khan H."/>
            <person name="Morris T."/>
            <person name="Shariati G."/>
            <person name="Karimi M."/>
            <person name="Kenna M.A."/>
            <person name="Seo G.H."/>
            <person name="Xu H."/>
            <person name="Lu W."/>
            <person name="Naz S."/>
            <person name="Galehdari H."/>
            <person name="Indzhykulian A.A."/>
            <person name="Shearer A.E."/>
            <person name="Vona B."/>
        </authorList>
    </citation>
    <scope>INVOLVEMENT IN DFNB124</scope>
    <scope>VARIANTS DFNB124 SER-129; ARG-605; VAL-1314; GLN-2479 AND 3381-ARG--TYR-4243 DEL</scope>
</reference>
<organism>
    <name type="scientific">Homo sapiens</name>
    <name type="common">Human</name>
    <dbReference type="NCBI Taxonomy" id="9606"/>
    <lineage>
        <taxon>Eukaryota</taxon>
        <taxon>Metazoa</taxon>
        <taxon>Chordata</taxon>
        <taxon>Craniata</taxon>
        <taxon>Vertebrata</taxon>
        <taxon>Euteleostomi</taxon>
        <taxon>Mammalia</taxon>
        <taxon>Eutheria</taxon>
        <taxon>Euarchontoglires</taxon>
        <taxon>Primates</taxon>
        <taxon>Haplorrhini</taxon>
        <taxon>Catarrhini</taxon>
        <taxon>Hominidae</taxon>
        <taxon>Homo</taxon>
    </lineage>
</organism>
<feature type="signal peptide" evidence="2">
    <location>
        <begin position="1"/>
        <end position="20"/>
    </location>
</feature>
<feature type="chain" id="PRO_0000318572" description="Fibrocystin-L">
    <location>
        <begin position="21"/>
        <end position="4243"/>
    </location>
</feature>
<feature type="topological domain" description="Extracellular" evidence="2">
    <location>
        <begin position="21"/>
        <end position="4210"/>
    </location>
</feature>
<feature type="transmembrane region" description="Helical" evidence="2">
    <location>
        <begin position="4211"/>
        <end position="4231"/>
    </location>
</feature>
<feature type="topological domain" description="Cytoplasmic" evidence="2">
    <location>
        <begin position="4232"/>
        <end position="4243"/>
    </location>
</feature>
<feature type="domain" description="IPT/TIG 1">
    <location>
        <begin position="31"/>
        <end position="129"/>
    </location>
</feature>
<feature type="domain" description="IPT/TIG 2">
    <location>
        <begin position="146"/>
        <end position="255"/>
    </location>
</feature>
<feature type="domain" description="IPT/TIG 3">
    <location>
        <begin position="270"/>
        <end position="361"/>
    </location>
</feature>
<feature type="domain" description="PA14" evidence="4">
    <location>
        <begin position="337"/>
        <end position="492"/>
    </location>
</feature>
<feature type="domain" description="IPT/TIG 4">
    <location>
        <begin position="1067"/>
        <end position="1151"/>
    </location>
</feature>
<feature type="domain" description="IPT/TIG 5">
    <location>
        <begin position="1155"/>
        <end position="1234"/>
    </location>
</feature>
<feature type="domain" description="IPT/TIG 6">
    <location>
        <begin position="1240"/>
        <end position="1322"/>
    </location>
</feature>
<feature type="domain" description="IPT/TIG 7">
    <location>
        <begin position="1330"/>
        <end position="1469"/>
    </location>
</feature>
<feature type="domain" description="IPT/TIG 8">
    <location>
        <begin position="1566"/>
        <end position="1649"/>
    </location>
</feature>
<feature type="domain" description="IPT/TIG 9">
    <location>
        <begin position="1659"/>
        <end position="1743"/>
    </location>
</feature>
<feature type="domain" description="IPT/TIG 10">
    <location>
        <begin position="1749"/>
        <end position="1828"/>
    </location>
</feature>
<feature type="domain" description="IPT/TIG 11">
    <location>
        <begin position="1831"/>
        <end position="1910"/>
    </location>
</feature>
<feature type="domain" description="IPT/TIG 12">
    <location>
        <begin position="1916"/>
        <end position="1997"/>
    </location>
</feature>
<feature type="domain" description="IPT/TIG 13">
    <location>
        <begin position="1999"/>
        <end position="2085"/>
    </location>
</feature>
<feature type="domain" description="IPT/TIG 14">
    <location>
        <begin position="2091"/>
        <end position="2176"/>
    </location>
</feature>
<feature type="domain" description="G8 1" evidence="3">
    <location>
        <begin position="2184"/>
        <end position="2304"/>
    </location>
</feature>
<feature type="repeat" description="PbH1 1">
    <location>
        <begin position="2508"/>
        <end position="2530"/>
    </location>
</feature>
<feature type="repeat" description="PbH1 2">
    <location>
        <begin position="2566"/>
        <end position="2588"/>
    </location>
</feature>
<feature type="repeat" description="PbH1 3">
    <location>
        <begin position="2665"/>
        <end position="2687"/>
    </location>
</feature>
<feature type="repeat" description="PbH1 4">
    <location>
        <begin position="2733"/>
        <end position="2756"/>
    </location>
</feature>
<feature type="domain" description="G8 2" evidence="3">
    <location>
        <begin position="3036"/>
        <end position="3174"/>
    </location>
</feature>
<feature type="repeat" description="PbH1 5">
    <location>
        <begin position="3293"/>
        <end position="3315"/>
    </location>
</feature>
<feature type="repeat" description="PbH1 6">
    <location>
        <begin position="3355"/>
        <end position="3377"/>
    </location>
</feature>
<feature type="repeat" description="PbH1 7">
    <location>
        <begin position="3416"/>
        <end position="3438"/>
    </location>
</feature>
<feature type="repeat" description="PbH1 8">
    <location>
        <begin position="3471"/>
        <end position="3493"/>
    </location>
</feature>
<feature type="repeat" description="PbH1 9">
    <location>
        <begin position="3527"/>
        <end position="3548"/>
    </location>
</feature>
<feature type="glycosylation site" description="O-linked (GalNAc...) threonine" evidence="2">
    <location>
        <position position="122"/>
    </location>
</feature>
<feature type="glycosylation site" description="O-linked (GalNAc...) threonine" evidence="2">
    <location>
        <position position="445"/>
    </location>
</feature>
<feature type="glycosylation site" description="O-linked (GalNAc...) threonine" evidence="2">
    <location>
        <position position="1803"/>
    </location>
</feature>
<feature type="glycosylation site" description="O-linked (GalNAc...) threonine" evidence="2">
    <location>
        <position position="1839"/>
    </location>
</feature>
<feature type="glycosylation site" description="O-linked (GalNAc...) threonine" evidence="2">
    <location>
        <position position="2320"/>
    </location>
</feature>
<feature type="glycosylation site" description="O-linked (GalNAc...) threonine" evidence="2">
    <location>
        <position position="3736"/>
    </location>
</feature>
<feature type="sequence variant" id="VAR_089536" description="In DFNB124; uncertain significance; dbSNP:rs773702657." evidence="6">
    <original>G</original>
    <variation>S</variation>
    <location>
        <position position="129"/>
    </location>
</feature>
<feature type="sequence variant" id="VAR_038760" description="In dbSNP:rs16879428.">
    <original>W</original>
    <variation>C</variation>
    <location>
        <position position="373"/>
    </location>
</feature>
<feature type="sequence variant" id="VAR_038761" description="In dbSNP:rs964307.">
    <original>Y</original>
    <variation>H</variation>
    <location>
        <position position="440"/>
    </location>
</feature>
<feature type="sequence variant" id="VAR_089537" description="In DFNB124; uncertain significance; the nucleotide substitution creating this missense variant may also affect splicing, leading to exon 17 skipping and consequently in-frame deletion of 48 amino acids from Val-557 to Arg-604; dbSNP:rs767753360." evidence="6">
    <original>G</original>
    <variation>R</variation>
    <location>
        <position position="605"/>
    </location>
</feature>
<feature type="sequence variant" id="VAR_038762" description="In dbSNP:rs4735133.">
    <original>H</original>
    <variation>R</variation>
    <location>
        <position position="923"/>
    </location>
</feature>
<feature type="sequence variant" id="VAR_038763" description="In dbSNP:rs16879534.">
    <original>Y</original>
    <variation>H</variation>
    <location>
        <position position="943"/>
    </location>
</feature>
<feature type="sequence variant" id="VAR_038764" description="In dbSNP:rs35375999.">
    <original>A</original>
    <variation>E</variation>
    <location>
        <position position="957"/>
    </location>
</feature>
<feature type="sequence variant" id="VAR_038765" description="In dbSNP:rs10093885.">
    <original>T</original>
    <variation>A</variation>
    <location>
        <position position="1192"/>
    </location>
</feature>
<feature type="sequence variant" id="VAR_089538" description="In DFNB124; uncertain significance; dbSNP:rs61745556." evidence="6">
    <original>G</original>
    <variation>V</variation>
    <location>
        <position position="1314"/>
    </location>
</feature>
<feature type="sequence variant" id="VAR_038766" description="In dbSNP:rs1673408.">
    <original>R</original>
    <variation>S</variation>
    <location>
        <position position="1514"/>
    </location>
</feature>
<feature type="sequence variant" id="VAR_038767" description="In dbSNP:rs7820062.">
    <original>T</original>
    <variation>R</variation>
    <location>
        <position position="1539"/>
    </location>
</feature>
<feature type="sequence variant" id="VAR_038768" description="In dbSNP:rs1673407." evidence="5">
    <original>V</original>
    <variation>L</variation>
    <location>
        <position position="1965"/>
    </location>
</feature>
<feature type="sequence variant" id="VAR_089539" description="In DFNB124; uncertain significance; dbSNP:rs529097022." evidence="6">
    <original>H</original>
    <variation>Q</variation>
    <location>
        <position position="2479"/>
    </location>
</feature>
<feature type="sequence variant" id="VAR_038769" description="In dbSNP:rs1783147.">
    <original>H</original>
    <variation>Q</variation>
    <location>
        <position position="3050"/>
    </location>
</feature>
<feature type="sequence variant" id="VAR_038770" description="In dbSNP:rs10441509.">
    <original>V</original>
    <variation>I</variation>
    <location>
        <position position="3080"/>
    </location>
</feature>
<feature type="sequence variant" id="VAR_089540" description="In DFNB124; uncertain significance." evidence="6">
    <location>
        <begin position="3381"/>
        <end position="4243"/>
    </location>
</feature>
<feature type="sequence variant" id="VAR_038771" description="In dbSNP:rs16879659.">
    <original>I</original>
    <variation>V</variation>
    <location>
        <position position="3411"/>
    </location>
</feature>
<feature type="sequence variant" id="VAR_038772" description="In dbSNP:rs9774677.">
    <original>D</original>
    <variation>E</variation>
    <location>
        <position position="3607"/>
    </location>
</feature>
<feature type="sequence variant" id="VAR_038773" description="In dbSNP:rs16879693.">
    <original>L</original>
    <variation>F</variation>
    <location>
        <position position="3862"/>
    </location>
</feature>
<feature type="sequence variant" id="VAR_038774" description="In dbSNP:rs1783174.">
    <original>V</original>
    <variation>I</variation>
    <location>
        <position position="4220"/>
    </location>
</feature>
<feature type="sequence conflict" description="In Ref. 4; CAB63761." evidence="7" ref="4">
    <original>K</original>
    <variation>N</variation>
    <location>
        <position position="4061"/>
    </location>
</feature>